<feature type="chain" id="PRO_1000164094" description="Polyisoprenyl-teichoic acid--peptidoglycan teichoic acid transferase TagU">
    <location>
        <begin position="1"/>
        <end position="303"/>
    </location>
</feature>
<feature type="topological domain" description="Cytoplasmic" evidence="1">
    <location>
        <begin position="1"/>
        <end position="4"/>
    </location>
</feature>
<feature type="transmembrane region" description="Helical; Signal-anchor for type II membrane protein" evidence="1">
    <location>
        <begin position="5"/>
        <end position="25"/>
    </location>
</feature>
<feature type="topological domain" description="Extracellular" evidence="1">
    <location>
        <begin position="26"/>
        <end position="303"/>
    </location>
</feature>
<gene>
    <name evidence="1" type="primary">tagU</name>
    <name type="ordered locus">BAA_5533</name>
</gene>
<reference key="1">
    <citation type="submission" date="2009-04" db="EMBL/GenBank/DDBJ databases">
        <title>Genome sequence of Bacillus anthracis A0248.</title>
        <authorList>
            <person name="Dodson R.J."/>
            <person name="Munk A.C."/>
            <person name="Bruce D."/>
            <person name="Detter C."/>
            <person name="Tapia R."/>
            <person name="Sutton G."/>
            <person name="Sims D."/>
            <person name="Brettin T."/>
        </authorList>
    </citation>
    <scope>NUCLEOTIDE SEQUENCE [LARGE SCALE GENOMIC DNA]</scope>
    <source>
        <strain>A0248</strain>
    </source>
</reference>
<proteinExistence type="inferred from homology"/>
<organism>
    <name type="scientific">Bacillus anthracis (strain A0248)</name>
    <dbReference type="NCBI Taxonomy" id="592021"/>
    <lineage>
        <taxon>Bacteria</taxon>
        <taxon>Bacillati</taxon>
        <taxon>Bacillota</taxon>
        <taxon>Bacilli</taxon>
        <taxon>Bacillales</taxon>
        <taxon>Bacillaceae</taxon>
        <taxon>Bacillus</taxon>
        <taxon>Bacillus cereus group</taxon>
    </lineage>
</organism>
<protein>
    <recommendedName>
        <fullName evidence="1">Polyisoprenyl-teichoic acid--peptidoglycan teichoic acid transferase TagU</fullName>
        <ecNumber evidence="1">2.7.8.-</ecNumber>
    </recommendedName>
</protein>
<accession>C3P1B4</accession>
<dbReference type="EC" id="2.7.8.-" evidence="1"/>
<dbReference type="EMBL" id="CP001598">
    <property type="protein sequence ID" value="ACQ46762.1"/>
    <property type="molecule type" value="Genomic_DNA"/>
</dbReference>
<dbReference type="RefSeq" id="WP_000727089.1">
    <property type="nucleotide sequence ID" value="NC_012659.1"/>
</dbReference>
<dbReference type="SMR" id="C3P1B4"/>
<dbReference type="GeneID" id="45025096"/>
<dbReference type="KEGG" id="bai:BAA_5533"/>
<dbReference type="HOGENOM" id="CLU_016455_2_2_9"/>
<dbReference type="GO" id="GO:0005886">
    <property type="term" value="C:plasma membrane"/>
    <property type="evidence" value="ECO:0007669"/>
    <property type="project" value="UniProtKB-SubCell"/>
</dbReference>
<dbReference type="GO" id="GO:0016780">
    <property type="term" value="F:phosphotransferase activity, for other substituted phosphate groups"/>
    <property type="evidence" value="ECO:0007669"/>
    <property type="project" value="UniProtKB-UniRule"/>
</dbReference>
<dbReference type="GO" id="GO:0070726">
    <property type="term" value="P:cell wall assembly"/>
    <property type="evidence" value="ECO:0007669"/>
    <property type="project" value="UniProtKB-UniRule"/>
</dbReference>
<dbReference type="FunFam" id="3.40.630.190:FF:000003">
    <property type="entry name" value="Polyisoprenyl-teichoic acid--peptidoglycan teichoic acid transferase TagU"/>
    <property type="match status" value="1"/>
</dbReference>
<dbReference type="Gene3D" id="3.40.630.190">
    <property type="entry name" value="LCP protein"/>
    <property type="match status" value="1"/>
</dbReference>
<dbReference type="HAMAP" id="MF_01140">
    <property type="entry name" value="TagU_transferase"/>
    <property type="match status" value="1"/>
</dbReference>
<dbReference type="InterPro" id="IPR050922">
    <property type="entry name" value="LytR/CpsA/Psr_CW_biosynth"/>
</dbReference>
<dbReference type="InterPro" id="IPR004474">
    <property type="entry name" value="LytR_CpsA_psr"/>
</dbReference>
<dbReference type="InterPro" id="IPR023734">
    <property type="entry name" value="TagU"/>
</dbReference>
<dbReference type="NCBIfam" id="TIGR00350">
    <property type="entry name" value="lytR_cpsA_psr"/>
    <property type="match status" value="1"/>
</dbReference>
<dbReference type="NCBIfam" id="NF006897">
    <property type="entry name" value="PRK09379.1"/>
    <property type="match status" value="1"/>
</dbReference>
<dbReference type="PANTHER" id="PTHR33392">
    <property type="entry name" value="POLYISOPRENYL-TEICHOIC ACID--PEPTIDOGLYCAN TEICHOIC ACID TRANSFERASE TAGU"/>
    <property type="match status" value="1"/>
</dbReference>
<dbReference type="PANTHER" id="PTHR33392:SF6">
    <property type="entry name" value="POLYISOPRENYL-TEICHOIC ACID--PEPTIDOGLYCAN TEICHOIC ACID TRANSFERASE TAGU"/>
    <property type="match status" value="1"/>
</dbReference>
<dbReference type="Pfam" id="PF03816">
    <property type="entry name" value="LytR_cpsA_psr"/>
    <property type="match status" value="1"/>
</dbReference>
<name>TAGU_BACAA</name>
<sequence>MKKKILFWVLGILGVLIIGGGIYAYNVYSSVSNTLKEVHQPLKRDQNNSNVGEKVSKSEPVSILLLGADERGEDKGRSDSLMVITLNPKNNSMKTVSIPRDTYTEIVGKGKSDKINHAYAFGGVDMSVATVENFLNVPINYYIEVNMEGFKDIVDAVGGVDVKNDLEFTQDGHHFAKGNIHLTGDQALAFTRMRKQDPRGDFGRQMRQRQVMQGVIKKGASFSSLTGYGDVLSAIQKNVKTNLTQDQMFDMQKNYKDCLKNSEDIQIPGDGHKAADGIWYYYVPDAAKQDLTNKLRTHLEVTK</sequence>
<evidence type="ECO:0000255" key="1">
    <source>
        <dbReference type="HAMAP-Rule" id="MF_01140"/>
    </source>
</evidence>
<keyword id="KW-1003">Cell membrane</keyword>
<keyword id="KW-0961">Cell wall biogenesis/degradation</keyword>
<keyword id="KW-0472">Membrane</keyword>
<keyword id="KW-0735">Signal-anchor</keyword>
<keyword id="KW-0808">Transferase</keyword>
<keyword id="KW-0812">Transmembrane</keyword>
<keyword id="KW-1133">Transmembrane helix</keyword>
<comment type="function">
    <text evidence="1">May catalyze the final step in cell wall teichoic acid biosynthesis, the transfer of the anionic cell wall polymers (APs) from their lipid-linked precursor to the cell wall peptidoglycan (PG).</text>
</comment>
<comment type="pathway">
    <text evidence="1">Cell wall biogenesis.</text>
</comment>
<comment type="subcellular location">
    <subcellularLocation>
        <location evidence="1">Cell membrane</location>
        <topology evidence="1">Single-pass type II membrane protein</topology>
    </subcellularLocation>
</comment>
<comment type="similarity">
    <text evidence="1">Belongs to the LytR/CpsA/Psr (LCP) family.</text>
</comment>